<organism>
    <name type="scientific">Arabidopsis thaliana</name>
    <name type="common">Mouse-ear cress</name>
    <dbReference type="NCBI Taxonomy" id="3702"/>
    <lineage>
        <taxon>Eukaryota</taxon>
        <taxon>Viridiplantae</taxon>
        <taxon>Streptophyta</taxon>
        <taxon>Embryophyta</taxon>
        <taxon>Tracheophyta</taxon>
        <taxon>Spermatophyta</taxon>
        <taxon>Magnoliopsida</taxon>
        <taxon>eudicotyledons</taxon>
        <taxon>Gunneridae</taxon>
        <taxon>Pentapetalae</taxon>
        <taxon>rosids</taxon>
        <taxon>malvids</taxon>
        <taxon>Brassicales</taxon>
        <taxon>Brassicaceae</taxon>
        <taxon>Camelineae</taxon>
        <taxon>Arabidopsis</taxon>
    </lineage>
</organism>
<sequence>MLGAIHLGVLAACFVLFVPMAMAGWHLSRNKMLFFSGALFISLAVCVHLTPYFPSVSDIVASVSSVVVYDHRISCINEVNQIVWDVKPVPNPESVRRNNGSTKLDYFVKNWDWMKSRKVLSCEFQKLDKFDVSDLLNGSWVVVAGDSQARFVALSLLNLVLGSDSKAMDSVRGDLFRRHSDYSIVVKEIGMKLDFVWAPYEKDLDDLVVSYKKMKKYPDVVIMGTGLWHMLHVNNASDFGFRLRQLSSHVESLVPLTPKEQEGGGSVSGRSVHLFWIGMPVLINGMLNTDEKKEKMSDTVWHEYDRSLGESKILRQMGGPLILLDIQSFTWNCGPQCTLDGMHYDSAVYDAAVHVMLNALLIESHQSL</sequence>
<gene>
    <name evidence="5" type="primary">AXY9</name>
    <name evidence="8" type="ordered locus">At3g03210</name>
    <name evidence="9" type="ORF">T17B22.10</name>
</gene>
<accession>Q9M9N9</accession>
<accession>A0A178VCF2</accession>
<accession>Q8L7K6</accession>
<reference key="1">
    <citation type="journal article" date="2000" name="Nature">
        <title>Sequence and analysis of chromosome 3 of the plant Arabidopsis thaliana.</title>
        <authorList>
            <person name="Salanoubat M."/>
            <person name="Lemcke K."/>
            <person name="Rieger M."/>
            <person name="Ansorge W."/>
            <person name="Unseld M."/>
            <person name="Fartmann B."/>
            <person name="Valle G."/>
            <person name="Bloecker H."/>
            <person name="Perez-Alonso M."/>
            <person name="Obermaier B."/>
            <person name="Delseny M."/>
            <person name="Boutry M."/>
            <person name="Grivell L.A."/>
            <person name="Mache R."/>
            <person name="Puigdomenech P."/>
            <person name="De Simone V."/>
            <person name="Choisne N."/>
            <person name="Artiguenave F."/>
            <person name="Robert C."/>
            <person name="Brottier P."/>
            <person name="Wincker P."/>
            <person name="Cattolico L."/>
            <person name="Weissenbach J."/>
            <person name="Saurin W."/>
            <person name="Quetier F."/>
            <person name="Schaefer M."/>
            <person name="Mueller-Auer S."/>
            <person name="Gabel C."/>
            <person name="Fuchs M."/>
            <person name="Benes V."/>
            <person name="Wurmbach E."/>
            <person name="Drzonek H."/>
            <person name="Erfle H."/>
            <person name="Jordan N."/>
            <person name="Bangert S."/>
            <person name="Wiedelmann R."/>
            <person name="Kranz H."/>
            <person name="Voss H."/>
            <person name="Holland R."/>
            <person name="Brandt P."/>
            <person name="Nyakatura G."/>
            <person name="Vezzi A."/>
            <person name="D'Angelo M."/>
            <person name="Pallavicini A."/>
            <person name="Toppo S."/>
            <person name="Simionati B."/>
            <person name="Conrad A."/>
            <person name="Hornischer K."/>
            <person name="Kauer G."/>
            <person name="Loehnert T.-H."/>
            <person name="Nordsiek G."/>
            <person name="Reichelt J."/>
            <person name="Scharfe M."/>
            <person name="Schoen O."/>
            <person name="Bargues M."/>
            <person name="Terol J."/>
            <person name="Climent J."/>
            <person name="Navarro P."/>
            <person name="Collado C."/>
            <person name="Perez-Perez A."/>
            <person name="Ottenwaelder B."/>
            <person name="Duchemin D."/>
            <person name="Cooke R."/>
            <person name="Laudie M."/>
            <person name="Berger-Llauro C."/>
            <person name="Purnelle B."/>
            <person name="Masuy D."/>
            <person name="de Haan M."/>
            <person name="Maarse A.C."/>
            <person name="Alcaraz J.-P."/>
            <person name="Cottet A."/>
            <person name="Casacuberta E."/>
            <person name="Monfort A."/>
            <person name="Argiriou A."/>
            <person name="Flores M."/>
            <person name="Liguori R."/>
            <person name="Vitale D."/>
            <person name="Mannhaupt G."/>
            <person name="Haase D."/>
            <person name="Schoof H."/>
            <person name="Rudd S."/>
            <person name="Zaccaria P."/>
            <person name="Mewes H.-W."/>
            <person name="Mayer K.F.X."/>
            <person name="Kaul S."/>
            <person name="Town C.D."/>
            <person name="Koo H.L."/>
            <person name="Tallon L.J."/>
            <person name="Jenkins J."/>
            <person name="Rooney T."/>
            <person name="Rizzo M."/>
            <person name="Walts A."/>
            <person name="Utterback T."/>
            <person name="Fujii C.Y."/>
            <person name="Shea T.P."/>
            <person name="Creasy T.H."/>
            <person name="Haas B."/>
            <person name="Maiti R."/>
            <person name="Wu D."/>
            <person name="Peterson J."/>
            <person name="Van Aken S."/>
            <person name="Pai G."/>
            <person name="Militscher J."/>
            <person name="Sellers P."/>
            <person name="Gill J.E."/>
            <person name="Feldblyum T.V."/>
            <person name="Preuss D."/>
            <person name="Lin X."/>
            <person name="Nierman W.C."/>
            <person name="Salzberg S.L."/>
            <person name="White O."/>
            <person name="Venter J.C."/>
            <person name="Fraser C.M."/>
            <person name="Kaneko T."/>
            <person name="Nakamura Y."/>
            <person name="Sato S."/>
            <person name="Kato T."/>
            <person name="Asamizu E."/>
            <person name="Sasamoto S."/>
            <person name="Kimura T."/>
            <person name="Idesawa K."/>
            <person name="Kawashima K."/>
            <person name="Kishida Y."/>
            <person name="Kiyokawa C."/>
            <person name="Kohara M."/>
            <person name="Matsumoto M."/>
            <person name="Matsuno A."/>
            <person name="Muraki A."/>
            <person name="Nakayama S."/>
            <person name="Nakazaki N."/>
            <person name="Shinpo S."/>
            <person name="Takeuchi C."/>
            <person name="Wada T."/>
            <person name="Watanabe A."/>
            <person name="Yamada M."/>
            <person name="Yasuda M."/>
            <person name="Tabata S."/>
        </authorList>
    </citation>
    <scope>NUCLEOTIDE SEQUENCE [LARGE SCALE GENOMIC DNA]</scope>
    <source>
        <strain>cv. Columbia</strain>
    </source>
</reference>
<reference key="2">
    <citation type="journal article" date="2017" name="Plant J.">
        <title>Araport11: a complete reannotation of the Arabidopsis thaliana reference genome.</title>
        <authorList>
            <person name="Cheng C.Y."/>
            <person name="Krishnakumar V."/>
            <person name="Chan A.P."/>
            <person name="Thibaud-Nissen F."/>
            <person name="Schobel S."/>
            <person name="Town C.D."/>
        </authorList>
    </citation>
    <scope>GENOME REANNOTATION</scope>
    <source>
        <strain>cv. Columbia</strain>
    </source>
</reference>
<reference key="3">
    <citation type="journal article" date="2003" name="Science">
        <title>Empirical analysis of transcriptional activity in the Arabidopsis genome.</title>
        <authorList>
            <person name="Yamada K."/>
            <person name="Lim J."/>
            <person name="Dale J.M."/>
            <person name="Chen H."/>
            <person name="Shinn P."/>
            <person name="Palm C.J."/>
            <person name="Southwick A.M."/>
            <person name="Wu H.C."/>
            <person name="Kim C.J."/>
            <person name="Nguyen M."/>
            <person name="Pham P.K."/>
            <person name="Cheuk R.F."/>
            <person name="Karlin-Newmann G."/>
            <person name="Liu S.X."/>
            <person name="Lam B."/>
            <person name="Sakano H."/>
            <person name="Wu T."/>
            <person name="Yu G."/>
            <person name="Miranda M."/>
            <person name="Quach H.L."/>
            <person name="Tripp M."/>
            <person name="Chang C.H."/>
            <person name="Lee J.M."/>
            <person name="Toriumi M.J."/>
            <person name="Chan M.M."/>
            <person name="Tang C.C."/>
            <person name="Onodera C.S."/>
            <person name="Deng J.M."/>
            <person name="Akiyama K."/>
            <person name="Ansari Y."/>
            <person name="Arakawa T."/>
            <person name="Banh J."/>
            <person name="Banno F."/>
            <person name="Bowser L."/>
            <person name="Brooks S.Y."/>
            <person name="Carninci P."/>
            <person name="Chao Q."/>
            <person name="Choy N."/>
            <person name="Enju A."/>
            <person name="Goldsmith A.D."/>
            <person name="Gurjal M."/>
            <person name="Hansen N.F."/>
            <person name="Hayashizaki Y."/>
            <person name="Johnson-Hopson C."/>
            <person name="Hsuan V.W."/>
            <person name="Iida K."/>
            <person name="Karnes M."/>
            <person name="Khan S."/>
            <person name="Koesema E."/>
            <person name="Ishida J."/>
            <person name="Jiang P.X."/>
            <person name="Jones T."/>
            <person name="Kawai J."/>
            <person name="Kamiya A."/>
            <person name="Meyers C."/>
            <person name="Nakajima M."/>
            <person name="Narusaka M."/>
            <person name="Seki M."/>
            <person name="Sakurai T."/>
            <person name="Satou M."/>
            <person name="Tamse R."/>
            <person name="Vaysberg M."/>
            <person name="Wallender E.K."/>
            <person name="Wong C."/>
            <person name="Yamamura Y."/>
            <person name="Yuan S."/>
            <person name="Shinozaki K."/>
            <person name="Davis R.W."/>
            <person name="Theologis A."/>
            <person name="Ecker J.R."/>
        </authorList>
    </citation>
    <scope>NUCLEOTIDE SEQUENCE [LARGE SCALE MRNA]</scope>
    <source>
        <strain>cv. Columbia</strain>
    </source>
</reference>
<reference key="4">
    <citation type="submission" date="2004-12" db="EMBL/GenBank/DDBJ databases">
        <title>Arabidopsis ORF clones.</title>
        <authorList>
            <person name="Shinn P."/>
            <person name="Chen H."/>
            <person name="Cheuk R.F."/>
            <person name="Kim C.J."/>
            <person name="Ecker J.R."/>
        </authorList>
    </citation>
    <scope>NUCLEOTIDE SEQUENCE [LARGE SCALE MRNA]</scope>
    <source>
        <strain>cv. Columbia</strain>
    </source>
</reference>
<reference key="5">
    <citation type="journal article" date="2015" name="Plant Physiol.">
        <title>The role of the plant-specific ALTERED XYLOGLUCAN9 protein in Arabidopsis cell wall polysaccharide O-acetylation.</title>
        <authorList>
            <person name="Schultink A."/>
            <person name="Naylor D."/>
            <person name="Dama M."/>
            <person name="Pauly M."/>
        </authorList>
    </citation>
    <scope>FUNCTION</scope>
    <scope>SUBCELLULAR LOCATION</scope>
    <scope>TOPOLOGY</scope>
    <scope>DISRUPTION PHENOTYPE</scope>
</reference>
<reference key="6">
    <citation type="journal article" date="2018" name="Planta">
        <title>Xyloglucan O-acetyltransferases from Arabidopsis thaliana and Populus trichocarpa catalyze acetylation of fucosylated galactose residues on xyloglucan side chains.</title>
        <authorList>
            <person name="Zhong R."/>
            <person name="Cui D."/>
            <person name="Ye Z.H."/>
        </authorList>
    </citation>
    <scope>FUNCTION</scope>
</reference>
<protein>
    <recommendedName>
        <fullName evidence="5">Protein ALTERED XYLOGLUCAN 9</fullName>
    </recommendedName>
</protein>
<comment type="function">
    <text evidence="3 4">Component of the plant cell wall polysaccharide acetylation pathway (PubMed:25681330, PubMed:30083810). Does not directly catalyze O-acetylation of xyloglucan but exhibits weak acetylesterase activity in vitro (PubMed:30083810).</text>
</comment>
<comment type="subcellular location">
    <subcellularLocation>
        <location evidence="3">Golgi apparatus membrane</location>
        <topology evidence="1">Single-pass membrane protein</topology>
    </subcellularLocation>
</comment>
<comment type="disruption phenotype">
    <text evidence="3">Severe growth defects and collapsed xylem (PubMed:25681330). Decreased xyloglucan acetylation and decreased O-acetylation of xylan (PubMed:25681330).</text>
</comment>
<proteinExistence type="evidence at protein level"/>
<dbReference type="EMBL" id="AC012328">
    <property type="protein sequence ID" value="AAF26105.1"/>
    <property type="molecule type" value="Genomic_DNA"/>
</dbReference>
<dbReference type="EMBL" id="CP002686">
    <property type="protein sequence ID" value="AEE73913.1"/>
    <property type="molecule type" value="Genomic_DNA"/>
</dbReference>
<dbReference type="EMBL" id="AY128404">
    <property type="protein sequence ID" value="AAM91607.1"/>
    <property type="molecule type" value="mRNA"/>
</dbReference>
<dbReference type="EMBL" id="BT020433">
    <property type="protein sequence ID" value="AAW28560.1"/>
    <property type="molecule type" value="mRNA"/>
</dbReference>
<dbReference type="RefSeq" id="NP_186971.1">
    <property type="nucleotide sequence ID" value="NM_111191.4"/>
</dbReference>
<dbReference type="FunCoup" id="Q9M9N9">
    <property type="interactions" value="1530"/>
</dbReference>
<dbReference type="IntAct" id="Q9M9N9">
    <property type="interactions" value="18"/>
</dbReference>
<dbReference type="STRING" id="3702.Q9M9N9"/>
<dbReference type="GlyCosmos" id="Q9M9N9">
    <property type="glycosylation" value="3 sites, No reported glycans"/>
</dbReference>
<dbReference type="GlyGen" id="Q9M9N9">
    <property type="glycosylation" value="3 sites"/>
</dbReference>
<dbReference type="PaxDb" id="3702-AT3G03210.1"/>
<dbReference type="ProteomicsDB" id="179688"/>
<dbReference type="EnsemblPlants" id="AT3G03210.1">
    <property type="protein sequence ID" value="AT3G03210.1"/>
    <property type="gene ID" value="AT3G03210"/>
</dbReference>
<dbReference type="GeneID" id="821222"/>
<dbReference type="Gramene" id="AT3G03210.1">
    <property type="protein sequence ID" value="AT3G03210.1"/>
    <property type="gene ID" value="AT3G03210"/>
</dbReference>
<dbReference type="KEGG" id="ath:AT3G03210"/>
<dbReference type="Araport" id="AT3G03210"/>
<dbReference type="TAIR" id="AT3G03210">
    <property type="gene designation" value="AXY9"/>
</dbReference>
<dbReference type="eggNOG" id="ENOG502QSS7">
    <property type="taxonomic scope" value="Eukaryota"/>
</dbReference>
<dbReference type="HOGENOM" id="CLU_761527_0_0_1"/>
<dbReference type="InParanoid" id="Q9M9N9"/>
<dbReference type="OMA" id="LWHMLHI"/>
<dbReference type="PhylomeDB" id="Q9M9N9"/>
<dbReference type="PRO" id="PR:Q9M9N9"/>
<dbReference type="Proteomes" id="UP000006548">
    <property type="component" value="Chromosome 3"/>
</dbReference>
<dbReference type="ExpressionAtlas" id="Q9M9N9">
    <property type="expression patterns" value="baseline and differential"/>
</dbReference>
<dbReference type="GO" id="GO:0005794">
    <property type="term" value="C:Golgi apparatus"/>
    <property type="evidence" value="ECO:0000314"/>
    <property type="project" value="TAIR"/>
</dbReference>
<dbReference type="GO" id="GO:0005796">
    <property type="term" value="C:Golgi lumen"/>
    <property type="evidence" value="ECO:0000314"/>
    <property type="project" value="TAIR"/>
</dbReference>
<dbReference type="GO" id="GO:0000139">
    <property type="term" value="C:Golgi membrane"/>
    <property type="evidence" value="ECO:0007669"/>
    <property type="project" value="UniProtKB-SubCell"/>
</dbReference>
<dbReference type="GO" id="GO:0016407">
    <property type="term" value="F:acetyltransferase activity"/>
    <property type="evidence" value="ECO:0000315"/>
    <property type="project" value="TAIR"/>
</dbReference>
<dbReference type="GO" id="GO:1990538">
    <property type="term" value="F:xylan O-acetyltransferase activity"/>
    <property type="evidence" value="ECO:0000304"/>
    <property type="project" value="TAIR"/>
</dbReference>
<dbReference type="GO" id="GO:0045492">
    <property type="term" value="P:xylan biosynthetic process"/>
    <property type="evidence" value="ECO:0000315"/>
    <property type="project" value="TAIR"/>
</dbReference>
<dbReference type="PANTHER" id="PTHR13533">
    <property type="entry name" value="N-ACETYLNEURAMINATE 9-O-ACETYLTRANSFERASE"/>
    <property type="match status" value="1"/>
</dbReference>
<dbReference type="PANTHER" id="PTHR13533:SF31">
    <property type="entry name" value="PROTEIN ALTERED XYLOGLUCAN 9"/>
    <property type="match status" value="1"/>
</dbReference>
<keyword id="KW-0325">Glycoprotein</keyword>
<keyword id="KW-0333">Golgi apparatus</keyword>
<keyword id="KW-0472">Membrane</keyword>
<keyword id="KW-1185">Reference proteome</keyword>
<keyword id="KW-0812">Transmembrane</keyword>
<keyword id="KW-1133">Transmembrane helix</keyword>
<evidence type="ECO:0000255" key="1"/>
<evidence type="ECO:0000255" key="2">
    <source>
        <dbReference type="PROSITE-ProRule" id="PRU00498"/>
    </source>
</evidence>
<evidence type="ECO:0000269" key="3">
    <source>
    </source>
</evidence>
<evidence type="ECO:0000269" key="4">
    <source>
    </source>
</evidence>
<evidence type="ECO:0000303" key="5">
    <source>
    </source>
</evidence>
<evidence type="ECO:0000305" key="6"/>
<evidence type="ECO:0000305" key="7">
    <source>
    </source>
</evidence>
<evidence type="ECO:0000312" key="8">
    <source>
        <dbReference type="Araport" id="AT3G03210"/>
    </source>
</evidence>
<evidence type="ECO:0000312" key="9">
    <source>
        <dbReference type="EMBL" id="AAF26105.1"/>
    </source>
</evidence>
<feature type="chain" id="PRO_0000453953" description="Protein ALTERED XYLOGLUCAN 9">
    <location>
        <begin position="1"/>
        <end position="368"/>
    </location>
</feature>
<feature type="topological domain" description="Cytoplasmic" evidence="7">
    <location>
        <begin position="1"/>
        <end position="32"/>
    </location>
</feature>
<feature type="transmembrane region" description="Helical" evidence="1">
    <location>
        <begin position="33"/>
        <end position="53"/>
    </location>
</feature>
<feature type="topological domain" description="Lumenal" evidence="7">
    <location>
        <begin position="54"/>
        <end position="368"/>
    </location>
</feature>
<feature type="glycosylation site" description="N-linked (GlcNAc...) asparagine" evidence="2">
    <location>
        <position position="99"/>
    </location>
</feature>
<feature type="glycosylation site" description="N-linked (GlcNAc...) asparagine" evidence="2">
    <location>
        <position position="137"/>
    </location>
</feature>
<feature type="glycosylation site" description="N-linked (GlcNAc...) asparagine" evidence="2">
    <location>
        <position position="235"/>
    </location>
</feature>
<feature type="sequence conflict" description="In Ref. 3; AAM91607." evidence="6" ref="3">
    <original>G</original>
    <variation>R</variation>
    <location>
        <position position="224"/>
    </location>
</feature>
<name>AXY9_ARATH</name>